<evidence type="ECO:0000256" key="1">
    <source>
        <dbReference type="SAM" id="MobiDB-lite"/>
    </source>
</evidence>
<evidence type="ECO:0000305" key="2"/>
<name>HSP70_XENLA</name>
<keyword id="KW-0067">ATP-binding</keyword>
<keyword id="KW-0547">Nucleotide-binding</keyword>
<keyword id="KW-1185">Reference proteome</keyword>
<keyword id="KW-0346">Stress response</keyword>
<proteinExistence type="evidence at transcript level"/>
<comment type="similarity">
    <text evidence="2">Belongs to the heat shock protein 70 family.</text>
</comment>
<sequence length="647" mass="70915">MATKGVAVGIDLGTTYSCVGVFQHGKVEIIANDQGNRTTPSYVAFTDTERLIGDAAKNQVAMNPQNTVFDAKRLIGRKFNDPVVQCDLKHWPFQVVSDEGKPKVKVEYKGEEKSFFPEEISSMVLTKMKETAEAYLGHPVTNAVITVPAYFNDSQRQATKDAGVLAGLNILRIINEPTAAAIAYGLDKGARGEQNVLIFDLGGGTFDVSILTIDDGIFEVKATAGDTHLGGEDFDNRMVNHFVEEFKRKHKKDIGQNKRALRRLRTACDRAKRTLSSSSQASIEIDSLFEGIDFYTAITRARFEELCSDLFRGTLEPVEKALRDAKLDKSQIHEIVLVGGSTRIPKVQKLLQDFFNGRELNKSINPDEAVAYGAAVQAAILMGDKSENVQDLLLLDVAPLSLGLETAGGVMTVLIKRNTTIPTKQTQSFTTYSDNQPGVLIQVFEGERAMTKDNNLLGKFELSGIPPAPRGVPQIEVTFDIDANGILNVSAVEKSSGKQNKITITNDKGRLSKEDIEKMVQEAEKYKADDDAQRERVDAKNALESYAFNLKSMVEDENVKGKISDEDKRTISEKCTQVISWLENNQLAEKEEYAFQQKDLEKVCQPIITKLYQGGVPGGVPGGMPGSSCGAQARQGGNSGPTIEEVD</sequence>
<organism>
    <name type="scientific">Xenopus laevis</name>
    <name type="common">African clawed frog</name>
    <dbReference type="NCBI Taxonomy" id="8355"/>
    <lineage>
        <taxon>Eukaryota</taxon>
        <taxon>Metazoa</taxon>
        <taxon>Chordata</taxon>
        <taxon>Craniata</taxon>
        <taxon>Vertebrata</taxon>
        <taxon>Euteleostomi</taxon>
        <taxon>Amphibia</taxon>
        <taxon>Batrachia</taxon>
        <taxon>Anura</taxon>
        <taxon>Pipoidea</taxon>
        <taxon>Pipidae</taxon>
        <taxon>Xenopodinae</taxon>
        <taxon>Xenopus</taxon>
        <taxon>Xenopus</taxon>
    </lineage>
</organism>
<reference key="1">
    <citation type="journal article" date="1984" name="EMBO J.">
        <title>Xenopus hsp 70 genes are constitutively expressed in injected oocytes.</title>
        <authorList>
            <person name="Bienz M."/>
        </authorList>
    </citation>
    <scope>NUCLEOTIDE SEQUENCE [GENOMIC DNA]</scope>
</reference>
<reference key="2">
    <citation type="journal article" date="1984" name="Proc. Natl. Acad. Sci. U.S.A.">
        <title>Developmental control of the heat shock response in Xenopus.</title>
        <authorList>
            <person name="Bienz M."/>
        </authorList>
    </citation>
    <scope>NUCLEOTIDE SEQUENCE [MRNA] OF 81-120</scope>
</reference>
<accession>P02827</accession>
<protein>
    <recommendedName>
        <fullName>Heat shock 70 kDa protein</fullName>
        <shortName>HSP70</shortName>
    </recommendedName>
</protein>
<dbReference type="EMBL" id="X01102">
    <property type="protein sequence ID" value="CAA25576.1"/>
    <property type="molecule type" value="Genomic_DNA"/>
</dbReference>
<dbReference type="EMBL" id="K02307">
    <property type="protein sequence ID" value="AAA49759.1"/>
    <property type="molecule type" value="mRNA"/>
</dbReference>
<dbReference type="PIR" id="A03310">
    <property type="entry name" value="HHXL70"/>
</dbReference>
<dbReference type="RefSeq" id="NP_001121147.1">
    <property type="nucleotide sequence ID" value="NM_001127675.1"/>
</dbReference>
<dbReference type="SMR" id="P02827"/>
<dbReference type="BioGRID" id="99675">
    <property type="interactions" value="1"/>
</dbReference>
<dbReference type="IntAct" id="P02827">
    <property type="interactions" value="1"/>
</dbReference>
<dbReference type="DNASU" id="398343"/>
<dbReference type="GeneID" id="398343"/>
<dbReference type="KEGG" id="xla:398343"/>
<dbReference type="AGR" id="Xenbase:XB-GENE-485630"/>
<dbReference type="CTD" id="398343"/>
<dbReference type="Xenbase" id="XB-GENE-485630">
    <property type="gene designation" value="hsp70.L"/>
</dbReference>
<dbReference type="OrthoDB" id="2401965at2759"/>
<dbReference type="Proteomes" id="UP000186698">
    <property type="component" value="Chromosome 8L"/>
</dbReference>
<dbReference type="Bgee" id="398343">
    <property type="expression patterns" value="Expressed in egg cell and 18 other cell types or tissues"/>
</dbReference>
<dbReference type="GO" id="GO:0005737">
    <property type="term" value="C:cytoplasm"/>
    <property type="evidence" value="ECO:0000318"/>
    <property type="project" value="GO_Central"/>
</dbReference>
<dbReference type="GO" id="GO:0005829">
    <property type="term" value="C:cytosol"/>
    <property type="evidence" value="ECO:0000318"/>
    <property type="project" value="GO_Central"/>
</dbReference>
<dbReference type="GO" id="GO:0005634">
    <property type="term" value="C:nucleus"/>
    <property type="evidence" value="ECO:0000318"/>
    <property type="project" value="GO_Central"/>
</dbReference>
<dbReference type="GO" id="GO:0005886">
    <property type="term" value="C:plasma membrane"/>
    <property type="evidence" value="ECO:0000318"/>
    <property type="project" value="GO_Central"/>
</dbReference>
<dbReference type="GO" id="GO:0005524">
    <property type="term" value="F:ATP binding"/>
    <property type="evidence" value="ECO:0007669"/>
    <property type="project" value="UniProtKB-KW"/>
</dbReference>
<dbReference type="GO" id="GO:0016887">
    <property type="term" value="F:ATP hydrolysis activity"/>
    <property type="evidence" value="ECO:0000318"/>
    <property type="project" value="GO_Central"/>
</dbReference>
<dbReference type="GO" id="GO:0140662">
    <property type="term" value="F:ATP-dependent protein folding chaperone"/>
    <property type="evidence" value="ECO:0007669"/>
    <property type="project" value="InterPro"/>
</dbReference>
<dbReference type="GO" id="GO:0031072">
    <property type="term" value="F:heat shock protein binding"/>
    <property type="evidence" value="ECO:0000318"/>
    <property type="project" value="GO_Central"/>
</dbReference>
<dbReference type="GO" id="GO:0044183">
    <property type="term" value="F:protein folding chaperone"/>
    <property type="evidence" value="ECO:0000318"/>
    <property type="project" value="GO_Central"/>
</dbReference>
<dbReference type="GO" id="GO:0051085">
    <property type="term" value="P:chaperone cofactor-dependent protein refolding"/>
    <property type="evidence" value="ECO:0000318"/>
    <property type="project" value="GO_Central"/>
</dbReference>
<dbReference type="GO" id="GO:0042026">
    <property type="term" value="P:protein refolding"/>
    <property type="evidence" value="ECO:0000318"/>
    <property type="project" value="GO_Central"/>
</dbReference>
<dbReference type="CDD" id="cd10233">
    <property type="entry name" value="ASKHA_NBD_HSP70_HSPA1"/>
    <property type="match status" value="1"/>
</dbReference>
<dbReference type="FunFam" id="2.60.34.10:FF:000002">
    <property type="entry name" value="Heat shock 70 kDa"/>
    <property type="match status" value="1"/>
</dbReference>
<dbReference type="FunFam" id="3.30.420.40:FF:000172">
    <property type="entry name" value="Heat shock 70 kDa protein"/>
    <property type="match status" value="1"/>
</dbReference>
<dbReference type="FunFam" id="3.30.30.30:FF:000001">
    <property type="entry name" value="heat shock 70 kDa protein-like"/>
    <property type="match status" value="1"/>
</dbReference>
<dbReference type="FunFam" id="3.30.420.40:FF:000028">
    <property type="entry name" value="heat shock 70 kDa protein-like"/>
    <property type="match status" value="1"/>
</dbReference>
<dbReference type="FunFam" id="3.30.420.40:FF:000135">
    <property type="entry name" value="Heat shock cognate 71 kDa protein"/>
    <property type="match status" value="1"/>
</dbReference>
<dbReference type="FunFam" id="3.90.640.10:FF:000134">
    <property type="entry name" value="Heat shock cognate 71 kDa protein"/>
    <property type="match status" value="1"/>
</dbReference>
<dbReference type="FunFam" id="1.20.1270.10:FF:000003">
    <property type="entry name" value="heat shock cognate 71 kDa protein-like"/>
    <property type="match status" value="1"/>
</dbReference>
<dbReference type="FunFam" id="3.30.420.40:FF:000026">
    <property type="entry name" value="Heat shock protein 70"/>
    <property type="match status" value="1"/>
</dbReference>
<dbReference type="Gene3D" id="1.20.1270.10">
    <property type="match status" value="1"/>
</dbReference>
<dbReference type="Gene3D" id="3.30.30.30">
    <property type="match status" value="1"/>
</dbReference>
<dbReference type="Gene3D" id="3.30.420.40">
    <property type="match status" value="2"/>
</dbReference>
<dbReference type="Gene3D" id="3.90.640.10">
    <property type="entry name" value="Actin, Chain A, domain 4"/>
    <property type="match status" value="1"/>
</dbReference>
<dbReference type="Gene3D" id="2.60.34.10">
    <property type="entry name" value="Substrate Binding Domain Of DNAk, Chain A, domain 1"/>
    <property type="match status" value="1"/>
</dbReference>
<dbReference type="InterPro" id="IPR043129">
    <property type="entry name" value="ATPase_NBD"/>
</dbReference>
<dbReference type="InterPro" id="IPR018181">
    <property type="entry name" value="Heat_shock_70_CS"/>
</dbReference>
<dbReference type="InterPro" id="IPR029048">
    <property type="entry name" value="HSP70_C_sf"/>
</dbReference>
<dbReference type="InterPro" id="IPR029047">
    <property type="entry name" value="HSP70_peptide-bd_sf"/>
</dbReference>
<dbReference type="InterPro" id="IPR013126">
    <property type="entry name" value="Hsp_70_fam"/>
</dbReference>
<dbReference type="NCBIfam" id="NF001413">
    <property type="entry name" value="PRK00290.1"/>
    <property type="match status" value="1"/>
</dbReference>
<dbReference type="PANTHER" id="PTHR19375">
    <property type="entry name" value="HEAT SHOCK PROTEIN 70KDA"/>
    <property type="match status" value="1"/>
</dbReference>
<dbReference type="Pfam" id="PF00012">
    <property type="entry name" value="HSP70"/>
    <property type="match status" value="1"/>
</dbReference>
<dbReference type="PRINTS" id="PR00301">
    <property type="entry name" value="HEATSHOCK70"/>
</dbReference>
<dbReference type="SUPFAM" id="SSF53067">
    <property type="entry name" value="Actin-like ATPase domain"/>
    <property type="match status" value="2"/>
</dbReference>
<dbReference type="SUPFAM" id="SSF100934">
    <property type="entry name" value="Heat shock protein 70kD (HSP70), C-terminal subdomain"/>
    <property type="match status" value="1"/>
</dbReference>
<dbReference type="SUPFAM" id="SSF100920">
    <property type="entry name" value="Heat shock protein 70kD (HSP70), peptide-binding domain"/>
    <property type="match status" value="1"/>
</dbReference>
<dbReference type="PROSITE" id="PS00297">
    <property type="entry name" value="HSP70_1"/>
    <property type="match status" value="1"/>
</dbReference>
<dbReference type="PROSITE" id="PS00329">
    <property type="entry name" value="HSP70_2"/>
    <property type="match status" value="1"/>
</dbReference>
<dbReference type="PROSITE" id="PS01036">
    <property type="entry name" value="HSP70_3"/>
    <property type="match status" value="1"/>
</dbReference>
<feature type="chain" id="PRO_0000078324" description="Heat shock 70 kDa protein">
    <location>
        <begin position="1"/>
        <end position="647"/>
    </location>
</feature>
<feature type="region of interest" description="Disordered" evidence="1">
    <location>
        <begin position="622"/>
        <end position="647"/>
    </location>
</feature>